<feature type="chain" id="PRO_0000424146" description="Archaetidylinositol phosphate synthase">
    <location>
        <begin position="1"/>
        <end position="195"/>
    </location>
</feature>
<feature type="transmembrane region" description="Helical" evidence="2">
    <location>
        <begin position="27"/>
        <end position="47"/>
    </location>
</feature>
<feature type="transmembrane region" description="Helical" evidence="2">
    <location>
        <begin position="54"/>
        <end position="74"/>
    </location>
</feature>
<feature type="transmembrane region" description="Helical" evidence="2">
    <location>
        <begin position="99"/>
        <end position="119"/>
    </location>
</feature>
<feature type="transmembrane region" description="Helical" evidence="2">
    <location>
        <begin position="158"/>
        <end position="178"/>
    </location>
</feature>
<feature type="active site" description="Proton acceptor" evidence="1">
    <location>
        <position position="93"/>
    </location>
</feature>
<feature type="binding site" evidence="1">
    <location>
        <position position="68"/>
    </location>
    <ligand>
        <name>Mg(2+)</name>
        <dbReference type="ChEBI" id="CHEBI:18420"/>
        <label>1</label>
    </ligand>
</feature>
<feature type="binding site" evidence="1">
    <location>
        <position position="68"/>
    </location>
    <ligand>
        <name>Mg(2+)</name>
        <dbReference type="ChEBI" id="CHEBI:18420"/>
        <label>2</label>
    </ligand>
</feature>
<feature type="binding site" evidence="1">
    <location>
        <position position="71"/>
    </location>
    <ligand>
        <name>Mg(2+)</name>
        <dbReference type="ChEBI" id="CHEBI:18420"/>
        <label>1</label>
    </ligand>
</feature>
<feature type="binding site" evidence="1">
    <location>
        <position position="89"/>
    </location>
    <ligand>
        <name>Mg(2+)</name>
        <dbReference type="ChEBI" id="CHEBI:18420"/>
        <label>1</label>
    </ligand>
</feature>
<feature type="binding site" evidence="1">
    <location>
        <position position="89"/>
    </location>
    <ligand>
        <name>Mg(2+)</name>
        <dbReference type="ChEBI" id="CHEBI:18420"/>
        <label>2</label>
    </ligand>
</feature>
<feature type="binding site" evidence="1">
    <location>
        <position position="93"/>
    </location>
    <ligand>
        <name>Mg(2+)</name>
        <dbReference type="ChEBI" id="CHEBI:18420"/>
        <label>2</label>
    </ligand>
</feature>
<gene>
    <name type="ordered locus">MTH_1691</name>
</gene>
<keyword id="KW-1003">Cell membrane</keyword>
<keyword id="KW-0444">Lipid biosynthesis</keyword>
<keyword id="KW-0443">Lipid metabolism</keyword>
<keyword id="KW-0460">Magnesium</keyword>
<keyword id="KW-0464">Manganese</keyword>
<keyword id="KW-0472">Membrane</keyword>
<keyword id="KW-0479">Metal-binding</keyword>
<keyword id="KW-1208">Phospholipid metabolism</keyword>
<keyword id="KW-1185">Reference proteome</keyword>
<keyword id="KW-0808">Transferase</keyword>
<keyword id="KW-0812">Transmembrane</keyword>
<keyword id="KW-1133">Transmembrane helix</keyword>
<reference key="1">
    <citation type="journal article" date="1997" name="J. Bacteriol.">
        <title>Complete genome sequence of Methanobacterium thermoautotrophicum deltaH: functional analysis and comparative genomics.</title>
        <authorList>
            <person name="Smith D.R."/>
            <person name="Doucette-Stamm L.A."/>
            <person name="Deloughery C."/>
            <person name="Lee H.-M."/>
            <person name="Dubois J."/>
            <person name="Aldredge T."/>
            <person name="Bashirzadeh R."/>
            <person name="Blakely D."/>
            <person name="Cook R."/>
            <person name="Gilbert K."/>
            <person name="Harrison D."/>
            <person name="Hoang L."/>
            <person name="Keagle P."/>
            <person name="Lumm W."/>
            <person name="Pothier B."/>
            <person name="Qiu D."/>
            <person name="Spadafora R."/>
            <person name="Vicare R."/>
            <person name="Wang Y."/>
            <person name="Wierzbowski J."/>
            <person name="Gibson R."/>
            <person name="Jiwani N."/>
            <person name="Caruso A."/>
            <person name="Bush D."/>
            <person name="Safer H."/>
            <person name="Patwell D."/>
            <person name="Prabhakar S."/>
            <person name="McDougall S."/>
            <person name="Shimer G."/>
            <person name="Goyal A."/>
            <person name="Pietrovski S."/>
            <person name="Church G.M."/>
            <person name="Daniels C.J."/>
            <person name="Mao J.-I."/>
            <person name="Rice P."/>
            <person name="Noelling J."/>
            <person name="Reeve J.N."/>
        </authorList>
    </citation>
    <scope>NUCLEOTIDE SEQUENCE [LARGE SCALE GENOMIC DNA]</scope>
    <source>
        <strain>ATCC 29096 / DSM 1053 / JCM 10044 / NBRC 100330 / Delta H</strain>
    </source>
</reference>
<reference key="2">
    <citation type="journal article" date="2009" name="J. Biol. Chem.">
        <title>A novel biosynthetic pathway of archaetidyl-myo-inositol via archaetidyl-myo-inositol phosphate from CDP-archaeol and D-glucose 6-phosphate in methanoarchaeon Methanothermobacter thermautotrophicus cells.</title>
        <authorList>
            <person name="Morii H."/>
            <person name="Kiyonari S."/>
            <person name="Ishino Y."/>
            <person name="Koga Y."/>
        </authorList>
    </citation>
    <scope>FUNCTION</scope>
    <scope>CATALYTIC ACTIVITY</scope>
    <scope>SUBCELLULAR LOCATION</scope>
    <scope>COFACTOR</scope>
</reference>
<sequence>MPDINESMLNQFRPVIRRFIDPIADRIALPADYITLTGFLVACAASAGYASGSLITGAALLAASGFIDVLDGAVARRRFRPTAFGGFLDSTLDRLSDGIIIIGITAGGFTGLLTGLLALHSGLMVSYVRARAESLGIECAVGIAERAERIIIILAGSLAGYLIHPWFMDAAIIVLAALGYFTMIQRMIYVWQRLK</sequence>
<name>AIPS_METTH</name>
<accession>O27726</accession>
<organism>
    <name type="scientific">Methanothermobacter thermautotrophicus (strain ATCC 29096 / DSM 1053 / JCM 10044 / NBRC 100330 / Delta H)</name>
    <name type="common">Methanobacterium thermoautotrophicum</name>
    <dbReference type="NCBI Taxonomy" id="187420"/>
    <lineage>
        <taxon>Archaea</taxon>
        <taxon>Methanobacteriati</taxon>
        <taxon>Methanobacteriota</taxon>
        <taxon>Methanomada group</taxon>
        <taxon>Methanobacteria</taxon>
        <taxon>Methanobacteriales</taxon>
        <taxon>Methanobacteriaceae</taxon>
        <taxon>Methanothermobacter</taxon>
    </lineage>
</organism>
<proteinExistence type="evidence at protein level"/>
<protein>
    <recommendedName>
        <fullName evidence="5">Archaetidylinositol phosphate synthase</fullName>
        <shortName evidence="5">AIP synthase</shortName>
        <ecNumber evidence="4">2.7.8.39</ecNumber>
    </recommendedName>
</protein>
<dbReference type="EC" id="2.7.8.39" evidence="4"/>
<dbReference type="EMBL" id="AE000666">
    <property type="protein sequence ID" value="AAB86163.1"/>
    <property type="molecule type" value="Genomic_DNA"/>
</dbReference>
<dbReference type="PIR" id="B69093">
    <property type="entry name" value="B69093"/>
</dbReference>
<dbReference type="SMR" id="O27726"/>
<dbReference type="STRING" id="187420.MTH_1691"/>
<dbReference type="PaxDb" id="187420-MTH_1691"/>
<dbReference type="EnsemblBacteria" id="AAB86163">
    <property type="protein sequence ID" value="AAB86163"/>
    <property type="gene ID" value="MTH_1691"/>
</dbReference>
<dbReference type="KEGG" id="mth:MTH_1691"/>
<dbReference type="PATRIC" id="fig|187420.15.peg.1651"/>
<dbReference type="HOGENOM" id="CLU_080384_1_2_2"/>
<dbReference type="InParanoid" id="O27726"/>
<dbReference type="BioCyc" id="MetaCyc:MONOMER-15156"/>
<dbReference type="BRENDA" id="2.7.8.39">
    <property type="organism ID" value="3256"/>
</dbReference>
<dbReference type="UniPathway" id="UPA00085"/>
<dbReference type="Proteomes" id="UP000005223">
    <property type="component" value="Chromosome"/>
</dbReference>
<dbReference type="GO" id="GO:0016020">
    <property type="term" value="C:membrane"/>
    <property type="evidence" value="ECO:0000314"/>
    <property type="project" value="UniProtKB"/>
</dbReference>
<dbReference type="GO" id="GO:0005886">
    <property type="term" value="C:plasma membrane"/>
    <property type="evidence" value="ECO:0007669"/>
    <property type="project" value="UniProtKB-SubCell"/>
</dbReference>
<dbReference type="GO" id="GO:0000287">
    <property type="term" value="F:magnesium ion binding"/>
    <property type="evidence" value="ECO:0007669"/>
    <property type="project" value="UniProtKB-UniRule"/>
</dbReference>
<dbReference type="GO" id="GO:0016780">
    <property type="term" value="F:phosphotransferase activity, for other substituted phosphate groups"/>
    <property type="evidence" value="ECO:0000314"/>
    <property type="project" value="UniProtKB"/>
</dbReference>
<dbReference type="GO" id="GO:0008654">
    <property type="term" value="P:phospholipid biosynthetic process"/>
    <property type="evidence" value="ECO:0007669"/>
    <property type="project" value="UniProtKB-UniRule"/>
</dbReference>
<dbReference type="Gene3D" id="1.20.120.1760">
    <property type="match status" value="1"/>
</dbReference>
<dbReference type="HAMAP" id="MF_02242">
    <property type="entry name" value="AIP_synthase"/>
    <property type="match status" value="1"/>
</dbReference>
<dbReference type="InterPro" id="IPR044270">
    <property type="entry name" value="AIP_synthase"/>
</dbReference>
<dbReference type="InterPro" id="IPR054868">
    <property type="entry name" value="archin_ph_syn"/>
</dbReference>
<dbReference type="InterPro" id="IPR000462">
    <property type="entry name" value="CDP-OH_P_trans"/>
</dbReference>
<dbReference type="InterPro" id="IPR043130">
    <property type="entry name" value="CDP-OH_PTrfase_TM_dom"/>
</dbReference>
<dbReference type="InterPro" id="IPR048254">
    <property type="entry name" value="CDP_ALCOHOL_P_TRANSF_CS"/>
</dbReference>
<dbReference type="NCBIfam" id="NF040950">
    <property type="entry name" value="archin_ph_syn"/>
    <property type="match status" value="1"/>
</dbReference>
<dbReference type="Pfam" id="PF01066">
    <property type="entry name" value="CDP-OH_P_transf"/>
    <property type="match status" value="1"/>
</dbReference>
<dbReference type="PROSITE" id="PS00379">
    <property type="entry name" value="CDP_ALCOHOL_P_TRANSF"/>
    <property type="match status" value="1"/>
</dbReference>
<comment type="function">
    <text evidence="4">Catalyzes the formation of archaetidylinositol phosphate (AIP) from CDP-archaeol (CDP-ArOH or CDP-2,3-bis-(O-phytanyl)-sn-glycerol) and 1L-myo-inositol 1-phosphate (IP or 1D-myo-inositol 3-phosphate). AIP is a precursor of archaetidyl-myo-inositol (AI), an ether-type inositol phospholipid ubiquitously distributed in archaea membranes and essential for glycolipid biosynthesis in archaea.</text>
</comment>
<comment type="catalytic activity">
    <reaction evidence="4">
        <text>CDP-2,3-bis-O-(phytanyl)-sn-glycerol + 1D-myo-inositol 3-phosphate = saturated 1-archaetidyl-1D-myo-inositol 3-phosphate + CMP + H(+)</text>
        <dbReference type="Rhea" id="RHEA:36823"/>
        <dbReference type="ChEBI" id="CHEBI:15378"/>
        <dbReference type="ChEBI" id="CHEBI:58401"/>
        <dbReference type="ChEBI" id="CHEBI:60377"/>
        <dbReference type="ChEBI" id="CHEBI:74004"/>
        <dbReference type="ChEBI" id="CHEBI:74006"/>
        <dbReference type="EC" id="2.7.8.39"/>
    </reaction>
</comment>
<comment type="cofactor">
    <cofactor evidence="4">
        <name>Mn(2+)</name>
        <dbReference type="ChEBI" id="CHEBI:29035"/>
    </cofactor>
    <cofactor evidence="4">
        <name>Mg(2+)</name>
        <dbReference type="ChEBI" id="CHEBI:18420"/>
    </cofactor>
    <text evidence="6">Binds 2 Mg(2+) or Mn(2+) ions per subunit.</text>
</comment>
<comment type="pathway">
    <text evidence="7">Lipid metabolism; phospholipid metabolism.</text>
</comment>
<comment type="subcellular location">
    <subcellularLocation>
        <location evidence="7">Cell membrane</location>
        <topology evidence="7">Multi-pass membrane protein</topology>
    </subcellularLocation>
</comment>
<comment type="similarity">
    <text evidence="3 6">Belongs to the CDP-alcohol phosphatidyltransferase class-I family.</text>
</comment>
<evidence type="ECO:0000250" key="1">
    <source>
        <dbReference type="UniProtKB" id="P9WPG7"/>
    </source>
</evidence>
<evidence type="ECO:0000255" key="2"/>
<evidence type="ECO:0000255" key="3">
    <source>
        <dbReference type="HAMAP-Rule" id="MF_02242"/>
    </source>
</evidence>
<evidence type="ECO:0000269" key="4">
    <source>
    </source>
</evidence>
<evidence type="ECO:0000303" key="5">
    <source>
    </source>
</evidence>
<evidence type="ECO:0000305" key="6"/>
<evidence type="ECO:0000305" key="7">
    <source>
    </source>
</evidence>